<sequence length="431" mass="48177">MLDPKYLRSEIDEAAARLATRGYVLDVAAVNALEEKRKDLQSRTQELQAERNARSKSIGEAARRGEDVAPLKAEVTKINDELETSKIELDALLTEIKSISDAIPNLPSETTPVGRDENDNVEVRRWGTPRQFTFPVRDHIDLGEAAKGVDFKNGVKLSGARFVVMKGQIARLHRALAQFMLDLHTLQHGYTECYVPYLVNPDSLYGTGQLPKFSQDLFNTGIEGEGEDEGKMRKFSLIPTSEVPLTNMARDEIFDEQELPIKMTAHSPCFRSEAGSYGRDTRGLIRMHQFDKVEMVQLVHPEKSWEALEEMAGHAEKVLQLLELPYRVMALATGDMGFCAAKTYDLEVWLPAQNTYREISSVSNCTDFQARRMQARVRIDGKPQLLHTLNGSGLAVGRTLVAVIENYQQEDGRIAIPAALQSYMGGLTHIG</sequence>
<proteinExistence type="inferred from homology"/>
<reference key="1">
    <citation type="journal article" date="2008" name="BMC Genomics">
        <title>The genome of Aeromonas salmonicida subsp. salmonicida A449: insights into the evolution of a fish pathogen.</title>
        <authorList>
            <person name="Reith M.E."/>
            <person name="Singh R.K."/>
            <person name="Curtis B."/>
            <person name="Boyd J.M."/>
            <person name="Bouevitch A."/>
            <person name="Kimball J."/>
            <person name="Munholland J."/>
            <person name="Murphy C."/>
            <person name="Sarty D."/>
            <person name="Williams J."/>
            <person name="Nash J.H."/>
            <person name="Johnson S.C."/>
            <person name="Brown L.L."/>
        </authorList>
    </citation>
    <scope>NUCLEOTIDE SEQUENCE [LARGE SCALE GENOMIC DNA]</scope>
    <source>
        <strain>A449</strain>
    </source>
</reference>
<evidence type="ECO:0000255" key="1">
    <source>
        <dbReference type="HAMAP-Rule" id="MF_00176"/>
    </source>
</evidence>
<evidence type="ECO:0000256" key="2">
    <source>
        <dbReference type="SAM" id="MobiDB-lite"/>
    </source>
</evidence>
<organism>
    <name type="scientific">Aeromonas salmonicida (strain A449)</name>
    <dbReference type="NCBI Taxonomy" id="382245"/>
    <lineage>
        <taxon>Bacteria</taxon>
        <taxon>Pseudomonadati</taxon>
        <taxon>Pseudomonadota</taxon>
        <taxon>Gammaproteobacteria</taxon>
        <taxon>Aeromonadales</taxon>
        <taxon>Aeromonadaceae</taxon>
        <taxon>Aeromonas</taxon>
    </lineage>
</organism>
<keyword id="KW-0030">Aminoacyl-tRNA synthetase</keyword>
<keyword id="KW-0067">ATP-binding</keyword>
<keyword id="KW-0963">Cytoplasm</keyword>
<keyword id="KW-0436">Ligase</keyword>
<keyword id="KW-0547">Nucleotide-binding</keyword>
<keyword id="KW-0648">Protein biosynthesis</keyword>
<comment type="function">
    <text evidence="1">Catalyzes the attachment of serine to tRNA(Ser). Is also able to aminoacylate tRNA(Sec) with serine, to form the misacylated tRNA L-seryl-tRNA(Sec), which will be further converted into selenocysteinyl-tRNA(Sec).</text>
</comment>
<comment type="catalytic activity">
    <reaction evidence="1">
        <text>tRNA(Ser) + L-serine + ATP = L-seryl-tRNA(Ser) + AMP + diphosphate + H(+)</text>
        <dbReference type="Rhea" id="RHEA:12292"/>
        <dbReference type="Rhea" id="RHEA-COMP:9669"/>
        <dbReference type="Rhea" id="RHEA-COMP:9703"/>
        <dbReference type="ChEBI" id="CHEBI:15378"/>
        <dbReference type="ChEBI" id="CHEBI:30616"/>
        <dbReference type="ChEBI" id="CHEBI:33019"/>
        <dbReference type="ChEBI" id="CHEBI:33384"/>
        <dbReference type="ChEBI" id="CHEBI:78442"/>
        <dbReference type="ChEBI" id="CHEBI:78533"/>
        <dbReference type="ChEBI" id="CHEBI:456215"/>
        <dbReference type="EC" id="6.1.1.11"/>
    </reaction>
</comment>
<comment type="catalytic activity">
    <reaction evidence="1">
        <text>tRNA(Sec) + L-serine + ATP = L-seryl-tRNA(Sec) + AMP + diphosphate + H(+)</text>
        <dbReference type="Rhea" id="RHEA:42580"/>
        <dbReference type="Rhea" id="RHEA-COMP:9742"/>
        <dbReference type="Rhea" id="RHEA-COMP:10128"/>
        <dbReference type="ChEBI" id="CHEBI:15378"/>
        <dbReference type="ChEBI" id="CHEBI:30616"/>
        <dbReference type="ChEBI" id="CHEBI:33019"/>
        <dbReference type="ChEBI" id="CHEBI:33384"/>
        <dbReference type="ChEBI" id="CHEBI:78442"/>
        <dbReference type="ChEBI" id="CHEBI:78533"/>
        <dbReference type="ChEBI" id="CHEBI:456215"/>
        <dbReference type="EC" id="6.1.1.11"/>
    </reaction>
</comment>
<comment type="pathway">
    <text evidence="1">Aminoacyl-tRNA biosynthesis; selenocysteinyl-tRNA(Sec) biosynthesis; L-seryl-tRNA(Sec) from L-serine and tRNA(Sec): step 1/1.</text>
</comment>
<comment type="subunit">
    <text evidence="1">Homodimer. The tRNA molecule binds across the dimer.</text>
</comment>
<comment type="subcellular location">
    <subcellularLocation>
        <location evidence="1">Cytoplasm</location>
    </subcellularLocation>
</comment>
<comment type="domain">
    <text evidence="1">Consists of two distinct domains, a catalytic core and a N-terminal extension that is involved in tRNA binding.</text>
</comment>
<comment type="similarity">
    <text evidence="1">Belongs to the class-II aminoacyl-tRNA synthetase family. Type-1 seryl-tRNA synthetase subfamily.</text>
</comment>
<dbReference type="EC" id="6.1.1.11" evidence="1"/>
<dbReference type="EMBL" id="CP000644">
    <property type="protein sequence ID" value="ABO90478.1"/>
    <property type="molecule type" value="Genomic_DNA"/>
</dbReference>
<dbReference type="RefSeq" id="WP_005310745.1">
    <property type="nucleotide sequence ID" value="NC_009348.1"/>
</dbReference>
<dbReference type="SMR" id="A4SNK6"/>
<dbReference type="STRING" id="29491.GCA_000820065_01492"/>
<dbReference type="KEGG" id="asa:ASA_2435"/>
<dbReference type="eggNOG" id="COG0172">
    <property type="taxonomic scope" value="Bacteria"/>
</dbReference>
<dbReference type="HOGENOM" id="CLU_023797_1_1_6"/>
<dbReference type="UniPathway" id="UPA00906">
    <property type="reaction ID" value="UER00895"/>
</dbReference>
<dbReference type="Proteomes" id="UP000000225">
    <property type="component" value="Chromosome"/>
</dbReference>
<dbReference type="GO" id="GO:0005737">
    <property type="term" value="C:cytoplasm"/>
    <property type="evidence" value="ECO:0007669"/>
    <property type="project" value="UniProtKB-SubCell"/>
</dbReference>
<dbReference type="GO" id="GO:0005524">
    <property type="term" value="F:ATP binding"/>
    <property type="evidence" value="ECO:0007669"/>
    <property type="project" value="UniProtKB-UniRule"/>
</dbReference>
<dbReference type="GO" id="GO:0004828">
    <property type="term" value="F:serine-tRNA ligase activity"/>
    <property type="evidence" value="ECO:0007669"/>
    <property type="project" value="UniProtKB-UniRule"/>
</dbReference>
<dbReference type="GO" id="GO:0016260">
    <property type="term" value="P:selenocysteine biosynthetic process"/>
    <property type="evidence" value="ECO:0007669"/>
    <property type="project" value="UniProtKB-UniRule"/>
</dbReference>
<dbReference type="GO" id="GO:0006434">
    <property type="term" value="P:seryl-tRNA aminoacylation"/>
    <property type="evidence" value="ECO:0007669"/>
    <property type="project" value="UniProtKB-UniRule"/>
</dbReference>
<dbReference type="CDD" id="cd00770">
    <property type="entry name" value="SerRS_core"/>
    <property type="match status" value="1"/>
</dbReference>
<dbReference type="Gene3D" id="3.30.930.10">
    <property type="entry name" value="Bira Bifunctional Protein, Domain 2"/>
    <property type="match status" value="1"/>
</dbReference>
<dbReference type="Gene3D" id="1.10.287.40">
    <property type="entry name" value="Serine-tRNA synthetase, tRNA binding domain"/>
    <property type="match status" value="1"/>
</dbReference>
<dbReference type="HAMAP" id="MF_00176">
    <property type="entry name" value="Ser_tRNA_synth_type1"/>
    <property type="match status" value="1"/>
</dbReference>
<dbReference type="InterPro" id="IPR002314">
    <property type="entry name" value="aa-tRNA-synt_IIb"/>
</dbReference>
<dbReference type="InterPro" id="IPR006195">
    <property type="entry name" value="aa-tRNA-synth_II"/>
</dbReference>
<dbReference type="InterPro" id="IPR045864">
    <property type="entry name" value="aa-tRNA-synth_II/BPL/LPL"/>
</dbReference>
<dbReference type="InterPro" id="IPR002317">
    <property type="entry name" value="Ser-tRNA-ligase_type_1"/>
</dbReference>
<dbReference type="InterPro" id="IPR015866">
    <property type="entry name" value="Ser-tRNA-synth_1_N"/>
</dbReference>
<dbReference type="InterPro" id="IPR042103">
    <property type="entry name" value="SerRS_1_N_sf"/>
</dbReference>
<dbReference type="InterPro" id="IPR033729">
    <property type="entry name" value="SerRS_core"/>
</dbReference>
<dbReference type="InterPro" id="IPR010978">
    <property type="entry name" value="tRNA-bd_arm"/>
</dbReference>
<dbReference type="NCBIfam" id="TIGR00414">
    <property type="entry name" value="serS"/>
    <property type="match status" value="1"/>
</dbReference>
<dbReference type="PANTHER" id="PTHR43697:SF1">
    <property type="entry name" value="SERINE--TRNA LIGASE"/>
    <property type="match status" value="1"/>
</dbReference>
<dbReference type="PANTHER" id="PTHR43697">
    <property type="entry name" value="SERYL-TRNA SYNTHETASE"/>
    <property type="match status" value="1"/>
</dbReference>
<dbReference type="Pfam" id="PF02403">
    <property type="entry name" value="Seryl_tRNA_N"/>
    <property type="match status" value="1"/>
</dbReference>
<dbReference type="Pfam" id="PF00587">
    <property type="entry name" value="tRNA-synt_2b"/>
    <property type="match status" value="1"/>
</dbReference>
<dbReference type="PIRSF" id="PIRSF001529">
    <property type="entry name" value="Ser-tRNA-synth_IIa"/>
    <property type="match status" value="1"/>
</dbReference>
<dbReference type="PRINTS" id="PR00981">
    <property type="entry name" value="TRNASYNTHSER"/>
</dbReference>
<dbReference type="SUPFAM" id="SSF55681">
    <property type="entry name" value="Class II aaRS and biotin synthetases"/>
    <property type="match status" value="1"/>
</dbReference>
<dbReference type="SUPFAM" id="SSF46589">
    <property type="entry name" value="tRNA-binding arm"/>
    <property type="match status" value="1"/>
</dbReference>
<dbReference type="PROSITE" id="PS50862">
    <property type="entry name" value="AA_TRNA_LIGASE_II"/>
    <property type="match status" value="1"/>
</dbReference>
<protein>
    <recommendedName>
        <fullName evidence="1">Serine--tRNA ligase</fullName>
        <ecNumber evidence="1">6.1.1.11</ecNumber>
    </recommendedName>
    <alternativeName>
        <fullName evidence="1">Seryl-tRNA synthetase</fullName>
        <shortName evidence="1">SerRS</shortName>
    </alternativeName>
    <alternativeName>
        <fullName evidence="1">Seryl-tRNA(Ser/Sec) synthetase</fullName>
    </alternativeName>
</protein>
<gene>
    <name evidence="1" type="primary">serS</name>
    <name type="ordered locus">ASA_2435</name>
</gene>
<accession>A4SNK6</accession>
<feature type="chain" id="PRO_1000019605" description="Serine--tRNA ligase">
    <location>
        <begin position="1"/>
        <end position="431"/>
    </location>
</feature>
<feature type="region of interest" description="Disordered" evidence="2">
    <location>
        <begin position="41"/>
        <end position="66"/>
    </location>
</feature>
<feature type="binding site" evidence="1">
    <location>
        <begin position="240"/>
        <end position="242"/>
    </location>
    <ligand>
        <name>L-serine</name>
        <dbReference type="ChEBI" id="CHEBI:33384"/>
    </ligand>
</feature>
<feature type="binding site" evidence="1">
    <location>
        <begin position="271"/>
        <end position="273"/>
    </location>
    <ligand>
        <name>ATP</name>
        <dbReference type="ChEBI" id="CHEBI:30616"/>
    </ligand>
</feature>
<feature type="binding site" evidence="1">
    <location>
        <position position="294"/>
    </location>
    <ligand>
        <name>L-serine</name>
        <dbReference type="ChEBI" id="CHEBI:33384"/>
    </ligand>
</feature>
<feature type="binding site" evidence="1">
    <location>
        <begin position="358"/>
        <end position="361"/>
    </location>
    <ligand>
        <name>ATP</name>
        <dbReference type="ChEBI" id="CHEBI:30616"/>
    </ligand>
</feature>
<feature type="binding site" evidence="1">
    <location>
        <position position="392"/>
    </location>
    <ligand>
        <name>L-serine</name>
        <dbReference type="ChEBI" id="CHEBI:33384"/>
    </ligand>
</feature>
<name>SYS_AERS4</name>